<feature type="chain" id="PRO_0000183060" description="Bifunctional protein PyrR">
    <location>
        <begin position="1"/>
        <end position="175"/>
    </location>
</feature>
<feature type="short sequence motif" description="PRPP-binding" evidence="2">
    <location>
        <begin position="98"/>
        <end position="110"/>
    </location>
</feature>
<feature type="binding site" evidence="1">
    <location>
        <begin position="40"/>
        <end position="41"/>
    </location>
    <ligand>
        <name>substrate</name>
    </ligand>
</feature>
<feature type="binding site" evidence="1">
    <location>
        <position position="85"/>
    </location>
    <ligand>
        <name>substrate</name>
    </ligand>
</feature>
<feature type="binding site" evidence="1">
    <location>
        <begin position="102"/>
        <end position="110"/>
    </location>
    <ligand>
        <name>substrate</name>
    </ligand>
</feature>
<feature type="binding site" evidence="1">
    <location>
        <position position="135"/>
    </location>
    <ligand>
        <name>substrate</name>
    </ligand>
</feature>
<feature type="binding site" evidence="1">
    <location>
        <position position="159"/>
    </location>
    <ligand>
        <name>substrate</name>
    </ligand>
</feature>
<gene>
    <name evidence="2" type="primary">pyrR</name>
    <name type="ordered locus">SERP0764</name>
</gene>
<dbReference type="EC" id="2.4.2.9" evidence="2"/>
<dbReference type="EMBL" id="CP000029">
    <property type="protein sequence ID" value="AAW54167.1"/>
    <property type="molecule type" value="Genomic_DNA"/>
</dbReference>
<dbReference type="RefSeq" id="WP_002446241.1">
    <property type="nucleotide sequence ID" value="NC_002976.3"/>
</dbReference>
<dbReference type="SMR" id="Q5HPZ3"/>
<dbReference type="STRING" id="176279.SERP0764"/>
<dbReference type="KEGG" id="ser:SERP0764"/>
<dbReference type="eggNOG" id="COG2065">
    <property type="taxonomic scope" value="Bacteria"/>
</dbReference>
<dbReference type="HOGENOM" id="CLU_094234_2_1_9"/>
<dbReference type="Proteomes" id="UP000000531">
    <property type="component" value="Chromosome"/>
</dbReference>
<dbReference type="GO" id="GO:0003723">
    <property type="term" value="F:RNA binding"/>
    <property type="evidence" value="ECO:0007669"/>
    <property type="project" value="UniProtKB-UniRule"/>
</dbReference>
<dbReference type="GO" id="GO:0004845">
    <property type="term" value="F:uracil phosphoribosyltransferase activity"/>
    <property type="evidence" value="ECO:0007669"/>
    <property type="project" value="UniProtKB-UniRule"/>
</dbReference>
<dbReference type="GO" id="GO:0006353">
    <property type="term" value="P:DNA-templated transcription termination"/>
    <property type="evidence" value="ECO:0007669"/>
    <property type="project" value="UniProtKB-UniRule"/>
</dbReference>
<dbReference type="CDD" id="cd06223">
    <property type="entry name" value="PRTases_typeI"/>
    <property type="match status" value="1"/>
</dbReference>
<dbReference type="FunFam" id="3.40.50.2020:FF:000020">
    <property type="entry name" value="Bifunctional protein PyrR"/>
    <property type="match status" value="1"/>
</dbReference>
<dbReference type="Gene3D" id="3.40.50.2020">
    <property type="match status" value="1"/>
</dbReference>
<dbReference type="HAMAP" id="MF_01219">
    <property type="entry name" value="PyrR"/>
    <property type="match status" value="1"/>
</dbReference>
<dbReference type="InterPro" id="IPR000836">
    <property type="entry name" value="PRibTrfase_dom"/>
</dbReference>
<dbReference type="InterPro" id="IPR029057">
    <property type="entry name" value="PRTase-like"/>
</dbReference>
<dbReference type="InterPro" id="IPR023050">
    <property type="entry name" value="PyrR"/>
</dbReference>
<dbReference type="InterPro" id="IPR050137">
    <property type="entry name" value="PyrR_bifunctional"/>
</dbReference>
<dbReference type="NCBIfam" id="NF003546">
    <property type="entry name" value="PRK05205.1-2"/>
    <property type="match status" value="1"/>
</dbReference>
<dbReference type="NCBIfam" id="NF003548">
    <property type="entry name" value="PRK05205.1-4"/>
    <property type="match status" value="1"/>
</dbReference>
<dbReference type="NCBIfam" id="NF003549">
    <property type="entry name" value="PRK05205.1-5"/>
    <property type="match status" value="1"/>
</dbReference>
<dbReference type="PANTHER" id="PTHR11608">
    <property type="entry name" value="BIFUNCTIONAL PROTEIN PYRR"/>
    <property type="match status" value="1"/>
</dbReference>
<dbReference type="PANTHER" id="PTHR11608:SF0">
    <property type="entry name" value="BIFUNCTIONAL PROTEIN PYRR"/>
    <property type="match status" value="1"/>
</dbReference>
<dbReference type="Pfam" id="PF00156">
    <property type="entry name" value="Pribosyltran"/>
    <property type="match status" value="1"/>
</dbReference>
<dbReference type="SUPFAM" id="SSF53271">
    <property type="entry name" value="PRTase-like"/>
    <property type="match status" value="1"/>
</dbReference>
<sequence>MSERIILDDAAIQRTITRIAHEILEYNKGTKDLVLLGIKTRGAFLAHRIQDKINSIEQQLVPTGTIDITHFRDDVDKVVQQADQRAFDINVDINNKVVVIIDDVLYTGRTVRASLDAILLHTRPIKIGLAALVDRGHRELPIRADFVGKNIPTARDESVSVYLEEIDDRNAVVIE</sequence>
<reference key="1">
    <citation type="journal article" date="2005" name="J. Bacteriol.">
        <title>Insights on evolution of virulence and resistance from the complete genome analysis of an early methicillin-resistant Staphylococcus aureus strain and a biofilm-producing methicillin-resistant Staphylococcus epidermidis strain.</title>
        <authorList>
            <person name="Gill S.R."/>
            <person name="Fouts D.E."/>
            <person name="Archer G.L."/>
            <person name="Mongodin E.F."/>
            <person name="DeBoy R.T."/>
            <person name="Ravel J."/>
            <person name="Paulsen I.T."/>
            <person name="Kolonay J.F."/>
            <person name="Brinkac L.M."/>
            <person name="Beanan M.J."/>
            <person name="Dodson R.J."/>
            <person name="Daugherty S.C."/>
            <person name="Madupu R."/>
            <person name="Angiuoli S.V."/>
            <person name="Durkin A.S."/>
            <person name="Haft D.H."/>
            <person name="Vamathevan J.J."/>
            <person name="Khouri H."/>
            <person name="Utterback T.R."/>
            <person name="Lee C."/>
            <person name="Dimitrov G."/>
            <person name="Jiang L."/>
            <person name="Qin H."/>
            <person name="Weidman J."/>
            <person name="Tran K."/>
            <person name="Kang K.H."/>
            <person name="Hance I.R."/>
            <person name="Nelson K.E."/>
            <person name="Fraser C.M."/>
        </authorList>
    </citation>
    <scope>NUCLEOTIDE SEQUENCE [LARGE SCALE GENOMIC DNA]</scope>
    <source>
        <strain>ATCC 35984 / DSM 28319 / BCRC 17069 / CCUG 31568 / BM 3577 / RP62A</strain>
    </source>
</reference>
<accession>Q5HPZ3</accession>
<keyword id="KW-0328">Glycosyltransferase</keyword>
<keyword id="KW-1185">Reference proteome</keyword>
<keyword id="KW-0694">RNA-binding</keyword>
<keyword id="KW-0804">Transcription</keyword>
<keyword id="KW-0805">Transcription regulation</keyword>
<keyword id="KW-0806">Transcription termination</keyword>
<keyword id="KW-0808">Transferase</keyword>
<comment type="function">
    <text evidence="2">Regulates transcriptional attenuation of the pyrimidine nucleotide (pyr) operon by binding in a uridine-dependent manner to specific sites on pyr mRNA. This disrupts an antiterminator hairpin in the RNA and favors formation of a downstream transcription terminator, leading to a reduced expression of downstream genes.</text>
</comment>
<comment type="function">
    <text evidence="2">Also displays a weak uracil phosphoribosyltransferase activity which is not physiologically significant.</text>
</comment>
<comment type="catalytic activity">
    <reaction evidence="2">
        <text>UMP + diphosphate = 5-phospho-alpha-D-ribose 1-diphosphate + uracil</text>
        <dbReference type="Rhea" id="RHEA:13017"/>
        <dbReference type="ChEBI" id="CHEBI:17568"/>
        <dbReference type="ChEBI" id="CHEBI:33019"/>
        <dbReference type="ChEBI" id="CHEBI:57865"/>
        <dbReference type="ChEBI" id="CHEBI:58017"/>
        <dbReference type="EC" id="2.4.2.9"/>
    </reaction>
</comment>
<comment type="subunit">
    <text evidence="2">Homodimer and homohexamer; in equilibrium.</text>
</comment>
<comment type="similarity">
    <text evidence="2">Belongs to the purine/pyrimidine phosphoribosyltransferase family. PyrR subfamily.</text>
</comment>
<protein>
    <recommendedName>
        <fullName evidence="2">Bifunctional protein PyrR</fullName>
    </recommendedName>
    <domain>
        <recommendedName>
            <fullName evidence="2">Pyrimidine operon regulatory protein</fullName>
        </recommendedName>
    </domain>
    <domain>
        <recommendedName>
            <fullName evidence="2">Uracil phosphoribosyltransferase</fullName>
            <shortName evidence="2">UPRTase</shortName>
            <ecNumber evidence="2">2.4.2.9</ecNumber>
        </recommendedName>
    </domain>
</protein>
<evidence type="ECO:0000250" key="1"/>
<evidence type="ECO:0000255" key="2">
    <source>
        <dbReference type="HAMAP-Rule" id="MF_01219"/>
    </source>
</evidence>
<organism>
    <name type="scientific">Staphylococcus epidermidis (strain ATCC 35984 / DSM 28319 / BCRC 17069 / CCUG 31568 / BM 3577 / RP62A)</name>
    <dbReference type="NCBI Taxonomy" id="176279"/>
    <lineage>
        <taxon>Bacteria</taxon>
        <taxon>Bacillati</taxon>
        <taxon>Bacillota</taxon>
        <taxon>Bacilli</taxon>
        <taxon>Bacillales</taxon>
        <taxon>Staphylococcaceae</taxon>
        <taxon>Staphylococcus</taxon>
    </lineage>
</organism>
<name>PYRR_STAEQ</name>
<proteinExistence type="inferred from homology"/>